<name>TYDC4_PETCR</name>
<evidence type="ECO:0000250" key="1"/>
<evidence type="ECO:0000305" key="2"/>
<organism>
    <name type="scientific">Petroselinum crispum</name>
    <name type="common">Parsley</name>
    <name type="synonym">Petroselinum hortense</name>
    <dbReference type="NCBI Taxonomy" id="4043"/>
    <lineage>
        <taxon>Eukaryota</taxon>
        <taxon>Viridiplantae</taxon>
        <taxon>Streptophyta</taxon>
        <taxon>Embryophyta</taxon>
        <taxon>Tracheophyta</taxon>
        <taxon>Spermatophyta</taxon>
        <taxon>Magnoliopsida</taxon>
        <taxon>eudicotyledons</taxon>
        <taxon>Gunneridae</taxon>
        <taxon>Pentapetalae</taxon>
        <taxon>asterids</taxon>
        <taxon>campanulids</taxon>
        <taxon>Apiales</taxon>
        <taxon>Apiaceae</taxon>
        <taxon>Apioideae</taxon>
        <taxon>apioid superclade</taxon>
        <taxon>Apieae</taxon>
        <taxon>Petroselinum</taxon>
    </lineage>
</organism>
<gene>
    <name type="primary">TYRDC-4</name>
</gene>
<reference key="1">
    <citation type="journal article" date="1993" name="J. Biol. Chem.">
        <title>A pathogen-responsive gene of parsley encodes tyrosine decarboxylase.</title>
        <authorList>
            <person name="Kawalleck P."/>
            <person name="Keller H."/>
            <person name="Hahlbrock K."/>
            <person name="Scheel D."/>
            <person name="Somssich I.E."/>
        </authorList>
    </citation>
    <scope>NUCLEOTIDE SEQUENCE [MRNA]</scope>
</reference>
<dbReference type="EC" id="4.1.1.25"/>
<dbReference type="EMBL" id="M95685">
    <property type="protein sequence ID" value="AAA33863.1"/>
    <property type="molecule type" value="mRNA"/>
</dbReference>
<dbReference type="SMR" id="Q06088"/>
<dbReference type="GO" id="GO:0005737">
    <property type="term" value="C:cytoplasm"/>
    <property type="evidence" value="ECO:0007669"/>
    <property type="project" value="TreeGrafter"/>
</dbReference>
<dbReference type="GO" id="GO:0030170">
    <property type="term" value="F:pyridoxal phosphate binding"/>
    <property type="evidence" value="ECO:0007669"/>
    <property type="project" value="InterPro"/>
</dbReference>
<dbReference type="GO" id="GO:0004837">
    <property type="term" value="F:tyrosine decarboxylase activity"/>
    <property type="evidence" value="ECO:0007669"/>
    <property type="project" value="UniProtKB-EC"/>
</dbReference>
<dbReference type="GO" id="GO:0006520">
    <property type="term" value="P:amino acid metabolic process"/>
    <property type="evidence" value="ECO:0007669"/>
    <property type="project" value="InterPro"/>
</dbReference>
<dbReference type="GO" id="GO:0019752">
    <property type="term" value="P:carboxylic acid metabolic process"/>
    <property type="evidence" value="ECO:0007669"/>
    <property type="project" value="InterPro"/>
</dbReference>
<dbReference type="CDD" id="cd06450">
    <property type="entry name" value="DOPA_deC_like"/>
    <property type="match status" value="1"/>
</dbReference>
<dbReference type="FunFam" id="1.20.1340.10:FF:000001">
    <property type="entry name" value="Histidine decarboxylase"/>
    <property type="match status" value="1"/>
</dbReference>
<dbReference type="FunFam" id="3.40.640.10:FF:000025">
    <property type="entry name" value="Histidine decarboxylase"/>
    <property type="match status" value="1"/>
</dbReference>
<dbReference type="Gene3D" id="3.90.1150.10">
    <property type="entry name" value="Aspartate Aminotransferase, domain 1"/>
    <property type="match status" value="1"/>
</dbReference>
<dbReference type="Gene3D" id="1.20.1340.10">
    <property type="entry name" value="dopa decarboxylase, N-terminal domain"/>
    <property type="match status" value="1"/>
</dbReference>
<dbReference type="Gene3D" id="3.40.640.10">
    <property type="entry name" value="Type I PLP-dependent aspartate aminotransferase-like (Major domain)"/>
    <property type="match status" value="1"/>
</dbReference>
<dbReference type="InterPro" id="IPR010977">
    <property type="entry name" value="Aromatic_deC"/>
</dbReference>
<dbReference type="InterPro" id="IPR002129">
    <property type="entry name" value="PyrdxlP-dep_de-COase"/>
</dbReference>
<dbReference type="InterPro" id="IPR015424">
    <property type="entry name" value="PyrdxlP-dep_Trfase"/>
</dbReference>
<dbReference type="InterPro" id="IPR015421">
    <property type="entry name" value="PyrdxlP-dep_Trfase_major"/>
</dbReference>
<dbReference type="InterPro" id="IPR015422">
    <property type="entry name" value="PyrdxlP-dep_Trfase_small"/>
</dbReference>
<dbReference type="InterPro" id="IPR021115">
    <property type="entry name" value="Pyridoxal-P_BS"/>
</dbReference>
<dbReference type="PANTHER" id="PTHR11999">
    <property type="entry name" value="GROUP II PYRIDOXAL-5-PHOSPHATE DECARBOXYLASE"/>
    <property type="match status" value="1"/>
</dbReference>
<dbReference type="PANTHER" id="PTHR11999:SF96">
    <property type="entry name" value="TYROSINE DECARBOXYLASE"/>
    <property type="match status" value="1"/>
</dbReference>
<dbReference type="Pfam" id="PF00282">
    <property type="entry name" value="Pyridoxal_deC"/>
    <property type="match status" value="1"/>
</dbReference>
<dbReference type="PRINTS" id="PR00800">
    <property type="entry name" value="YHDCRBOXLASE"/>
</dbReference>
<dbReference type="SUPFAM" id="SSF53383">
    <property type="entry name" value="PLP-dependent transferases"/>
    <property type="match status" value="1"/>
</dbReference>
<dbReference type="PROSITE" id="PS00392">
    <property type="entry name" value="DDC_GAD_HDC_YDC"/>
    <property type="match status" value="1"/>
</dbReference>
<comment type="catalytic activity">
    <reaction>
        <text>L-tyrosine + H(+) = tyramine + CO2</text>
        <dbReference type="Rhea" id="RHEA:14345"/>
        <dbReference type="ChEBI" id="CHEBI:15378"/>
        <dbReference type="ChEBI" id="CHEBI:16526"/>
        <dbReference type="ChEBI" id="CHEBI:58315"/>
        <dbReference type="ChEBI" id="CHEBI:327995"/>
        <dbReference type="EC" id="4.1.1.25"/>
    </reaction>
</comment>
<comment type="cofactor">
    <cofactor>
        <name>pyridoxal 5'-phosphate</name>
        <dbReference type="ChEBI" id="CHEBI:597326"/>
    </cofactor>
</comment>
<comment type="subunit">
    <text evidence="1">Homodimer.</text>
</comment>
<comment type="similarity">
    <text evidence="2">Belongs to the group II decarboxylase family.</text>
</comment>
<keyword id="KW-0210">Decarboxylase</keyword>
<keyword id="KW-0456">Lyase</keyword>
<keyword id="KW-0663">Pyridoxal phosphate</keyword>
<sequence>MGSIDNLMAQKLTSQFPMNTLEPEEFRRQGHLMIDFLADYYRKVENYPVRSQVSPGYLREILPESAPYNPESLETILQDVQTKIIPGITHWQSPNFFAYFPSSGSTAGFLGEMLSTGFNVVGFNWMVSPAATELENVVTDWFGKMLQLPKSFLFSGGGGGVLQGTTCEAILCTLVAARDKNLRQHGMDNIGKLVVYCSDQTHSALQKAAKIAGIDPKNFRAIETTKSSNFKLCPKRLESAILYDLQNGLIPLYLCATVGTTSSTTVDPLPALTEVAKKYDLWVHVDAAYAGSACICPEFRQYLDGVENADSFSLNAHKWFLTTLDCCCLWVRDPSALIKSLSTYPEFLKNNASETNKVVDYKDWQIMLSRRFRALKLWFVLRSYGVGQLREFIRGHVGMAKYFEGLVGLDKRFEVVAPRLFSMVCFRIKPSAMIGKNDEDEVNEINRKLLESVNDSGRIYVSHTVLGGIYVIRFAIGGTLTDINHVSAAWKVLQDHADALLDEAFTAN</sequence>
<proteinExistence type="evidence at transcript level"/>
<accession>Q06088</accession>
<feature type="chain" id="PRO_0000146998" description="Tyrosine decarboxylase 4">
    <location>
        <begin position="1"/>
        <end position="508"/>
    </location>
</feature>
<feature type="modified residue" description="N6-(pyridoxal phosphate)lysine" evidence="1">
    <location>
        <position position="318"/>
    </location>
</feature>
<protein>
    <recommendedName>
        <fullName>Tyrosine decarboxylase 4</fullName>
        <ecNumber>4.1.1.25</ecNumber>
    </recommendedName>
</protein>